<accession>C1L2S1</accession>
<protein>
    <recommendedName>
        <fullName evidence="1">1-deoxy-D-xylulose-5-phosphate synthase</fullName>
        <ecNumber evidence="1">2.2.1.7</ecNumber>
    </recommendedName>
    <alternativeName>
        <fullName evidence="1">1-deoxyxylulose-5-phosphate synthase</fullName>
        <shortName evidence="1">DXP synthase</shortName>
        <shortName evidence="1">DXPS</shortName>
    </alternativeName>
</protein>
<gene>
    <name evidence="1" type="primary">dxs</name>
    <name type="ordered locus">Lm4b_01374</name>
</gene>
<dbReference type="EC" id="2.2.1.7" evidence="1"/>
<dbReference type="EMBL" id="FM242711">
    <property type="protein sequence ID" value="CAS05137.1"/>
    <property type="molecule type" value="Genomic_DNA"/>
</dbReference>
<dbReference type="RefSeq" id="WP_010958892.1">
    <property type="nucleotide sequence ID" value="NC_012488.1"/>
</dbReference>
<dbReference type="SMR" id="C1L2S1"/>
<dbReference type="KEGG" id="lmc:Lm4b_01374"/>
<dbReference type="HOGENOM" id="CLU_009227_1_4_9"/>
<dbReference type="UniPathway" id="UPA00064">
    <property type="reaction ID" value="UER00091"/>
</dbReference>
<dbReference type="GO" id="GO:0005829">
    <property type="term" value="C:cytosol"/>
    <property type="evidence" value="ECO:0007669"/>
    <property type="project" value="TreeGrafter"/>
</dbReference>
<dbReference type="GO" id="GO:0008661">
    <property type="term" value="F:1-deoxy-D-xylulose-5-phosphate synthase activity"/>
    <property type="evidence" value="ECO:0007669"/>
    <property type="project" value="UniProtKB-UniRule"/>
</dbReference>
<dbReference type="GO" id="GO:0000287">
    <property type="term" value="F:magnesium ion binding"/>
    <property type="evidence" value="ECO:0007669"/>
    <property type="project" value="UniProtKB-UniRule"/>
</dbReference>
<dbReference type="GO" id="GO:0030976">
    <property type="term" value="F:thiamine pyrophosphate binding"/>
    <property type="evidence" value="ECO:0007669"/>
    <property type="project" value="UniProtKB-UniRule"/>
</dbReference>
<dbReference type="GO" id="GO:0052865">
    <property type="term" value="P:1-deoxy-D-xylulose 5-phosphate biosynthetic process"/>
    <property type="evidence" value="ECO:0007669"/>
    <property type="project" value="UniProtKB-UniPathway"/>
</dbReference>
<dbReference type="GO" id="GO:0019288">
    <property type="term" value="P:isopentenyl diphosphate biosynthetic process, methylerythritol 4-phosphate pathway"/>
    <property type="evidence" value="ECO:0007669"/>
    <property type="project" value="TreeGrafter"/>
</dbReference>
<dbReference type="GO" id="GO:0016114">
    <property type="term" value="P:terpenoid biosynthetic process"/>
    <property type="evidence" value="ECO:0007669"/>
    <property type="project" value="UniProtKB-UniRule"/>
</dbReference>
<dbReference type="GO" id="GO:0009228">
    <property type="term" value="P:thiamine biosynthetic process"/>
    <property type="evidence" value="ECO:0007669"/>
    <property type="project" value="UniProtKB-UniRule"/>
</dbReference>
<dbReference type="CDD" id="cd02007">
    <property type="entry name" value="TPP_DXS"/>
    <property type="match status" value="1"/>
</dbReference>
<dbReference type="CDD" id="cd07033">
    <property type="entry name" value="TPP_PYR_DXS_TK_like"/>
    <property type="match status" value="1"/>
</dbReference>
<dbReference type="FunFam" id="3.40.50.920:FF:000002">
    <property type="entry name" value="1-deoxy-D-xylulose-5-phosphate synthase"/>
    <property type="match status" value="1"/>
</dbReference>
<dbReference type="FunFam" id="3.40.50.970:FF:000030">
    <property type="entry name" value="1-deoxy-D-xylulose-5-phosphate synthase"/>
    <property type="match status" value="1"/>
</dbReference>
<dbReference type="Gene3D" id="3.40.50.920">
    <property type="match status" value="1"/>
</dbReference>
<dbReference type="Gene3D" id="3.40.50.970">
    <property type="match status" value="2"/>
</dbReference>
<dbReference type="HAMAP" id="MF_00315">
    <property type="entry name" value="DXP_synth"/>
    <property type="match status" value="1"/>
</dbReference>
<dbReference type="InterPro" id="IPR005477">
    <property type="entry name" value="Dxylulose-5-P_synthase"/>
</dbReference>
<dbReference type="InterPro" id="IPR029061">
    <property type="entry name" value="THDP-binding"/>
</dbReference>
<dbReference type="InterPro" id="IPR009014">
    <property type="entry name" value="Transketo_C/PFOR_II"/>
</dbReference>
<dbReference type="InterPro" id="IPR005475">
    <property type="entry name" value="Transketolase-like_Pyr-bd"/>
</dbReference>
<dbReference type="InterPro" id="IPR020826">
    <property type="entry name" value="Transketolase_BS"/>
</dbReference>
<dbReference type="InterPro" id="IPR033248">
    <property type="entry name" value="Transketolase_C"/>
</dbReference>
<dbReference type="InterPro" id="IPR049557">
    <property type="entry name" value="Transketolase_CS"/>
</dbReference>
<dbReference type="NCBIfam" id="TIGR00204">
    <property type="entry name" value="dxs"/>
    <property type="match status" value="1"/>
</dbReference>
<dbReference type="NCBIfam" id="NF003933">
    <property type="entry name" value="PRK05444.2-2"/>
    <property type="match status" value="1"/>
</dbReference>
<dbReference type="NCBIfam" id="NF008968">
    <property type="entry name" value="PRK12315.1"/>
    <property type="match status" value="1"/>
</dbReference>
<dbReference type="PANTHER" id="PTHR43322">
    <property type="entry name" value="1-D-DEOXYXYLULOSE 5-PHOSPHATE SYNTHASE-RELATED"/>
    <property type="match status" value="1"/>
</dbReference>
<dbReference type="PANTHER" id="PTHR43322:SF5">
    <property type="entry name" value="1-DEOXY-D-XYLULOSE-5-PHOSPHATE SYNTHASE, CHLOROPLASTIC"/>
    <property type="match status" value="1"/>
</dbReference>
<dbReference type="Pfam" id="PF13292">
    <property type="entry name" value="DXP_synthase_N"/>
    <property type="match status" value="1"/>
</dbReference>
<dbReference type="Pfam" id="PF02779">
    <property type="entry name" value="Transket_pyr"/>
    <property type="match status" value="1"/>
</dbReference>
<dbReference type="Pfam" id="PF02780">
    <property type="entry name" value="Transketolase_C"/>
    <property type="match status" value="1"/>
</dbReference>
<dbReference type="SMART" id="SM00861">
    <property type="entry name" value="Transket_pyr"/>
    <property type="match status" value="1"/>
</dbReference>
<dbReference type="SUPFAM" id="SSF52518">
    <property type="entry name" value="Thiamin diphosphate-binding fold (THDP-binding)"/>
    <property type="match status" value="2"/>
</dbReference>
<dbReference type="SUPFAM" id="SSF52922">
    <property type="entry name" value="TK C-terminal domain-like"/>
    <property type="match status" value="1"/>
</dbReference>
<dbReference type="PROSITE" id="PS00801">
    <property type="entry name" value="TRANSKETOLASE_1"/>
    <property type="match status" value="1"/>
</dbReference>
<dbReference type="PROSITE" id="PS00802">
    <property type="entry name" value="TRANSKETOLASE_2"/>
    <property type="match status" value="1"/>
</dbReference>
<reference key="1">
    <citation type="journal article" date="2012" name="BMC Genomics">
        <title>Comparative genomics and transcriptomics of lineages I, II, and III strains of Listeria monocytogenes.</title>
        <authorList>
            <person name="Hain T."/>
            <person name="Ghai R."/>
            <person name="Billion A."/>
            <person name="Kuenne C.T."/>
            <person name="Steinweg C."/>
            <person name="Izar B."/>
            <person name="Mohamed W."/>
            <person name="Mraheil M."/>
            <person name="Domann E."/>
            <person name="Schaffrath S."/>
            <person name="Karst U."/>
            <person name="Goesmann A."/>
            <person name="Oehm S."/>
            <person name="Puhler A."/>
            <person name="Merkl R."/>
            <person name="Vorwerk S."/>
            <person name="Glaser P."/>
            <person name="Garrido P."/>
            <person name="Rusniok C."/>
            <person name="Buchrieser C."/>
            <person name="Goebel W."/>
            <person name="Chakraborty T."/>
        </authorList>
    </citation>
    <scope>NUCLEOTIDE SEQUENCE [LARGE SCALE GENOMIC DNA]</scope>
    <source>
        <strain>CLIP80459</strain>
    </source>
</reference>
<sequence length="609" mass="66714">MSCFYLDLLKIKDPSFMKQLDIQELEALAADIRAFLITSTSKSGGHIGPNLGVVELTIALHYSFNSPKDKFIWDVGHQSYVHKILTGRASQFGTLREHGGLDGFPKRKESIHDVFETGHSSTSLSAAAGMVIARDIKKEEFYVIPIIGDGALTGGMALEALNHIGDMGKDMIVILNDNDMSIAPNVGAIHNILGKLRTSDTFKQTKAKVDGTFFEELGFMYLGPINGHDIEEVITNLELAKRTKGPVLLHIVTKKGKGYQPAELDSRGTWHGTGPYKVETGSFIKPAKRAASWSSVISNELIRLAEKDERIVAITPAMPVGSKLEKFAKAFPERFFDVGIAEQHATTMAAGLATQGMKPFLTIYSTFLQRAYDQLVHDVCRQKLNVVIGIDRAGLVGADGETHQGIFDISFLNSIPNMTISMPKDEVEARQLMDTAFSYNDGPFAIRYPRGEAPGAQVAESNTLIPIGKWETIIQPIDAVILTFGPTIRLALKAAEQLELEGYHVGVINARYIKPLDEALLHQILKQKIPILTVEESLLKGGFGASVLEFIEASNYSDVVMHRIGLPDEFISHGSVSIILESFGISTTGIVLKIKEMLAQSGKLRAKRL</sequence>
<comment type="function">
    <text evidence="1">Catalyzes the acyloin condensation reaction between C atoms 2 and 3 of pyruvate and glyceraldehyde 3-phosphate to yield 1-deoxy-D-xylulose-5-phosphate (DXP).</text>
</comment>
<comment type="catalytic activity">
    <reaction evidence="1">
        <text>D-glyceraldehyde 3-phosphate + pyruvate + H(+) = 1-deoxy-D-xylulose 5-phosphate + CO2</text>
        <dbReference type="Rhea" id="RHEA:12605"/>
        <dbReference type="ChEBI" id="CHEBI:15361"/>
        <dbReference type="ChEBI" id="CHEBI:15378"/>
        <dbReference type="ChEBI" id="CHEBI:16526"/>
        <dbReference type="ChEBI" id="CHEBI:57792"/>
        <dbReference type="ChEBI" id="CHEBI:59776"/>
        <dbReference type="EC" id="2.2.1.7"/>
    </reaction>
</comment>
<comment type="cofactor">
    <cofactor evidence="1">
        <name>Mg(2+)</name>
        <dbReference type="ChEBI" id="CHEBI:18420"/>
    </cofactor>
    <text evidence="1">Binds 1 Mg(2+) ion per subunit.</text>
</comment>
<comment type="cofactor">
    <cofactor evidence="1">
        <name>thiamine diphosphate</name>
        <dbReference type="ChEBI" id="CHEBI:58937"/>
    </cofactor>
    <text evidence="1">Binds 1 thiamine pyrophosphate per subunit.</text>
</comment>
<comment type="pathway">
    <text evidence="1">Metabolic intermediate biosynthesis; 1-deoxy-D-xylulose 5-phosphate biosynthesis; 1-deoxy-D-xylulose 5-phosphate from D-glyceraldehyde 3-phosphate and pyruvate: step 1/1.</text>
</comment>
<comment type="subunit">
    <text evidence="1">Homodimer.</text>
</comment>
<comment type="similarity">
    <text evidence="1">Belongs to the transketolase family. DXPS subfamily.</text>
</comment>
<proteinExistence type="inferred from homology"/>
<organism>
    <name type="scientific">Listeria monocytogenes serotype 4b (strain CLIP80459)</name>
    <dbReference type="NCBI Taxonomy" id="568819"/>
    <lineage>
        <taxon>Bacteria</taxon>
        <taxon>Bacillati</taxon>
        <taxon>Bacillota</taxon>
        <taxon>Bacilli</taxon>
        <taxon>Bacillales</taxon>
        <taxon>Listeriaceae</taxon>
        <taxon>Listeria</taxon>
    </lineage>
</organism>
<keyword id="KW-0414">Isoprene biosynthesis</keyword>
<keyword id="KW-0460">Magnesium</keyword>
<keyword id="KW-0479">Metal-binding</keyword>
<keyword id="KW-0784">Thiamine biosynthesis</keyword>
<keyword id="KW-0786">Thiamine pyrophosphate</keyword>
<keyword id="KW-0808">Transferase</keyword>
<evidence type="ECO:0000255" key="1">
    <source>
        <dbReference type="HAMAP-Rule" id="MF_00315"/>
    </source>
</evidence>
<name>DXS_LISMC</name>
<feature type="chain" id="PRO_1000205071" description="1-deoxy-D-xylulose-5-phosphate synthase">
    <location>
        <begin position="1"/>
        <end position="609"/>
    </location>
</feature>
<feature type="binding site" evidence="1">
    <location>
        <position position="77"/>
    </location>
    <ligand>
        <name>thiamine diphosphate</name>
        <dbReference type="ChEBI" id="CHEBI:58937"/>
    </ligand>
</feature>
<feature type="binding site" evidence="1">
    <location>
        <begin position="118"/>
        <end position="120"/>
    </location>
    <ligand>
        <name>thiamine diphosphate</name>
        <dbReference type="ChEBI" id="CHEBI:58937"/>
    </ligand>
</feature>
<feature type="binding site" evidence="1">
    <location>
        <position position="149"/>
    </location>
    <ligand>
        <name>Mg(2+)</name>
        <dbReference type="ChEBI" id="CHEBI:18420"/>
    </ligand>
</feature>
<feature type="binding site" evidence="1">
    <location>
        <begin position="150"/>
        <end position="151"/>
    </location>
    <ligand>
        <name>thiamine diphosphate</name>
        <dbReference type="ChEBI" id="CHEBI:58937"/>
    </ligand>
</feature>
<feature type="binding site" evidence="1">
    <location>
        <position position="178"/>
    </location>
    <ligand>
        <name>Mg(2+)</name>
        <dbReference type="ChEBI" id="CHEBI:18420"/>
    </ligand>
</feature>
<feature type="binding site" evidence="1">
    <location>
        <position position="178"/>
    </location>
    <ligand>
        <name>thiamine diphosphate</name>
        <dbReference type="ChEBI" id="CHEBI:58937"/>
    </ligand>
</feature>
<feature type="binding site" evidence="1">
    <location>
        <position position="259"/>
    </location>
    <ligand>
        <name>thiamine diphosphate</name>
        <dbReference type="ChEBI" id="CHEBI:58937"/>
    </ligand>
</feature>
<feature type="binding site" evidence="1">
    <location>
        <position position="342"/>
    </location>
    <ligand>
        <name>thiamine diphosphate</name>
        <dbReference type="ChEBI" id="CHEBI:58937"/>
    </ligand>
</feature>